<feature type="chain" id="PRO_0000418926" description="Salutaridine synthase">
    <location>
        <begin position="1"/>
        <end position="505"/>
    </location>
</feature>
<feature type="transmembrane region" description="Helical" evidence="2">
    <location>
        <begin position="10"/>
        <end position="30"/>
    </location>
</feature>
<feature type="binding site" description="axial binding residue" evidence="1">
    <location>
        <position position="444"/>
    </location>
    <ligand>
        <name>heme</name>
        <dbReference type="ChEBI" id="CHEBI:30413"/>
    </ligand>
    <ligandPart>
        <name>Fe</name>
        <dbReference type="ChEBI" id="CHEBI:18248"/>
    </ligandPart>
</feature>
<name>C719B_PAPSO</name>
<sequence length="505" mass="56380">MAPINIEGNDFWMIACTVIIVFALVKFMFSKISFYQSANTTEWPAGPKTLPIIGNLHQLGGGVPLQVALANLAKVYGGAFTIWIGSWVPMIVISDIDNAREVLVNKSADYSARDVPDILKIITANGKNIADCDSGPFWHNLKKGLQSCINPSNVMSLSRLQEKDMQNLIKSMQERASQHNGIIKPLDHAKEASMRLLSRVIFGHDFSNEDLVIGVKDALDEMVRISGLASLADAFKIAKYLPSQRKNIRDMYATRDRVYNLIQPHIVPNLPANSFLYFLTSQDYSDEIIYSMVLEIFGLGVDSTAATAVWALSFLVGEQEIQEKLYREINNRTGGQRPVKVVDLKELPYLQAVMKETLRMKPIAPLAVPHVAAKDTTFKGRRIVKGTKVMVNLYAIHHDPNVFPAPYKFMPERFLKDVNSDGRFGDINTMESSLIPFGAGMRICGGVELAKQMVAFALASMVNEFKWDCVSEGKLPDLSEAISFILYMKNPLEAKITPRTKPFRQ</sequence>
<gene>
    <name evidence="5" type="primary">CYP719B1</name>
    <name evidence="6" type="synonym">SALSYN</name>
</gene>
<organism>
    <name type="scientific">Papaver somniferum</name>
    <name type="common">Opium poppy</name>
    <dbReference type="NCBI Taxonomy" id="3469"/>
    <lineage>
        <taxon>Eukaryota</taxon>
        <taxon>Viridiplantae</taxon>
        <taxon>Streptophyta</taxon>
        <taxon>Embryophyta</taxon>
        <taxon>Tracheophyta</taxon>
        <taxon>Spermatophyta</taxon>
        <taxon>Magnoliopsida</taxon>
        <taxon>Ranunculales</taxon>
        <taxon>Papaveraceae</taxon>
        <taxon>Papaveroideae</taxon>
        <taxon>Papaver</taxon>
    </lineage>
</organism>
<protein>
    <recommendedName>
        <fullName evidence="5">Salutaridine synthase</fullName>
        <ecNumber evidence="3 4">1.14.19.67</ecNumber>
    </recommendedName>
    <alternativeName>
        <fullName evidence="5">Cytochrome P450 719B1</fullName>
    </alternativeName>
</protein>
<keyword id="KW-0256">Endoplasmic reticulum</keyword>
<keyword id="KW-0349">Heme</keyword>
<keyword id="KW-0408">Iron</keyword>
<keyword id="KW-0472">Membrane</keyword>
<keyword id="KW-0479">Metal-binding</keyword>
<keyword id="KW-0503">Monooxygenase</keyword>
<keyword id="KW-0560">Oxidoreductase</keyword>
<keyword id="KW-0812">Transmembrane</keyword>
<keyword id="KW-1133">Transmembrane helix</keyword>
<evidence type="ECO:0000250" key="1">
    <source>
        <dbReference type="UniProtKB" id="Q94IP1"/>
    </source>
</evidence>
<evidence type="ECO:0000255" key="2"/>
<evidence type="ECO:0000269" key="3">
    <source>
    </source>
</evidence>
<evidence type="ECO:0000269" key="4">
    <source>
    </source>
</evidence>
<evidence type="ECO:0000303" key="5">
    <source>
    </source>
</evidence>
<evidence type="ECO:0000303" key="6">
    <source>
    </source>
</evidence>
<evidence type="ECO:0000305" key="7"/>
<accession>B1NF18</accession>
<comment type="function">
    <text evidence="3 4">Cytochrome P450 monooxygenase involved in biosynthesis of morphinan-type benzylisoquinoline and opiate alkaloids natural products (PubMed:19567876, PubMed:22098111). Catalyzes the formation of the morphinan alkaloid salutaridine by intramolecular phenol oxidation of (R)-reticuline without the incorporation of oxygen into the product (PubMed:19567876, PubMed:22098111). Can also use (R)-norreticuline as substrate (PubMed:19567876).</text>
</comment>
<comment type="catalytic activity">
    <reaction evidence="3 4">
        <text>(R)-reticuline + reduced [NADPH--hemoprotein reductase] + O2 = salutaridine + oxidized [NADPH--hemoprotein reductase] + 2 H2O + H(+)</text>
        <dbReference type="Rhea" id="RHEA:17713"/>
        <dbReference type="Rhea" id="RHEA-COMP:11964"/>
        <dbReference type="Rhea" id="RHEA-COMP:11965"/>
        <dbReference type="ChEBI" id="CHEBI:15377"/>
        <dbReference type="ChEBI" id="CHEBI:15378"/>
        <dbReference type="ChEBI" id="CHEBI:15379"/>
        <dbReference type="ChEBI" id="CHEBI:57618"/>
        <dbReference type="ChEBI" id="CHEBI:58061"/>
        <dbReference type="ChEBI" id="CHEBI:58144"/>
        <dbReference type="ChEBI" id="CHEBI:58210"/>
        <dbReference type="EC" id="1.14.19.67"/>
    </reaction>
</comment>
<comment type="cofactor">
    <cofactor evidence="1">
        <name>heme</name>
        <dbReference type="ChEBI" id="CHEBI:30413"/>
    </cofactor>
</comment>
<comment type="biophysicochemical properties">
    <kinetics>
        <KM evidence="3">6.2 uM for (R)-reticuline</KM>
        <text>kcat is 1.64 min(-1) for (R)-reticuline.</text>
    </kinetics>
    <phDependence>
        <text evidence="3">Optimum pH is 8.5.</text>
    </phDependence>
    <temperatureDependence>
        <text evidence="3">Optimum temperature is 30 degrees Celsius.</text>
    </temperatureDependence>
</comment>
<comment type="subcellular location">
    <subcellularLocation>
        <location evidence="7">Endoplasmic reticulum membrane</location>
        <topology evidence="7">Single-pass membrane protein</topology>
    </subcellularLocation>
</comment>
<comment type="induction">
    <text evidence="3">Up-regulated by elicitor treatment.</text>
</comment>
<comment type="disruption phenotype">
    <text evidence="4">Accumulation of upstream metabolites, such as reticuline, but reduced production of morphine.</text>
</comment>
<comment type="similarity">
    <text evidence="7">Belongs to the cytochrome P450 family.</text>
</comment>
<proteinExistence type="evidence at protein level"/>
<dbReference type="EC" id="1.14.19.67" evidence="3 4"/>
<dbReference type="EMBL" id="EF451150">
    <property type="protein sequence ID" value="ABR14720.1"/>
    <property type="molecule type" value="mRNA"/>
</dbReference>
<dbReference type="SMR" id="B1NF18"/>
<dbReference type="KEGG" id="ag:ABR14720"/>
<dbReference type="BioCyc" id="MetaCyc:MONOMER-12299"/>
<dbReference type="BRENDA" id="1.14.19.67">
    <property type="organism ID" value="4515"/>
</dbReference>
<dbReference type="BRENDA" id="1.14.21.4">
    <property type="organism ID" value="4515"/>
</dbReference>
<dbReference type="GO" id="GO:0005789">
    <property type="term" value="C:endoplasmic reticulum membrane"/>
    <property type="evidence" value="ECO:0007669"/>
    <property type="project" value="UniProtKB-SubCell"/>
</dbReference>
<dbReference type="GO" id="GO:0020037">
    <property type="term" value="F:heme binding"/>
    <property type="evidence" value="ECO:0007669"/>
    <property type="project" value="InterPro"/>
</dbReference>
<dbReference type="GO" id="GO:0005506">
    <property type="term" value="F:iron ion binding"/>
    <property type="evidence" value="ECO:0007669"/>
    <property type="project" value="InterPro"/>
</dbReference>
<dbReference type="GO" id="GO:0004497">
    <property type="term" value="F:monooxygenase activity"/>
    <property type="evidence" value="ECO:0007669"/>
    <property type="project" value="UniProtKB-KW"/>
</dbReference>
<dbReference type="GO" id="GO:0047055">
    <property type="term" value="F:salutaridine synthase activity"/>
    <property type="evidence" value="ECO:0000314"/>
    <property type="project" value="UniProtKB"/>
</dbReference>
<dbReference type="GO" id="GO:0097295">
    <property type="term" value="P:morphine biosynthetic process"/>
    <property type="evidence" value="ECO:0000314"/>
    <property type="project" value="UniProtKB"/>
</dbReference>
<dbReference type="FunFam" id="1.10.630.10:FF:000147">
    <property type="entry name" value="(S)-stylopine synthase 1"/>
    <property type="match status" value="1"/>
</dbReference>
<dbReference type="Gene3D" id="1.10.630.10">
    <property type="entry name" value="Cytochrome P450"/>
    <property type="match status" value="1"/>
</dbReference>
<dbReference type="InterPro" id="IPR001128">
    <property type="entry name" value="Cyt_P450"/>
</dbReference>
<dbReference type="InterPro" id="IPR002401">
    <property type="entry name" value="Cyt_P450_E_grp-I"/>
</dbReference>
<dbReference type="InterPro" id="IPR036396">
    <property type="entry name" value="Cyt_P450_sf"/>
</dbReference>
<dbReference type="PANTHER" id="PTHR47944">
    <property type="entry name" value="CYTOCHROME P450 98A9"/>
    <property type="match status" value="1"/>
</dbReference>
<dbReference type="PANTHER" id="PTHR47944:SF16">
    <property type="entry name" value="CYTOCHROME P450 FAMILY 1 SUBFAMILY A POLYPEPTIDE 1"/>
    <property type="match status" value="1"/>
</dbReference>
<dbReference type="Pfam" id="PF00067">
    <property type="entry name" value="p450"/>
    <property type="match status" value="1"/>
</dbReference>
<dbReference type="PRINTS" id="PR00463">
    <property type="entry name" value="EP450I"/>
</dbReference>
<dbReference type="PRINTS" id="PR00385">
    <property type="entry name" value="P450"/>
</dbReference>
<dbReference type="SUPFAM" id="SSF48264">
    <property type="entry name" value="Cytochrome P450"/>
    <property type="match status" value="1"/>
</dbReference>
<reference key="1">
    <citation type="journal article" date="2009" name="J. Biol. Chem.">
        <title>CYP719B1 is salutaridine synthase, the C-C phenol-coupling enzyme of morphine biosynthesis in opium poppy.</title>
        <authorList>
            <person name="Gesell A."/>
            <person name="Rolf M."/>
            <person name="Ziegler J."/>
            <person name="Diaz Chavez M.L."/>
            <person name="Huang F.C."/>
            <person name="Kutchan T.M."/>
        </authorList>
    </citation>
    <scope>NUCLEOTIDE SEQUENCE [MRNA]</scope>
    <scope>FUNCTION</scope>
    <scope>CATALYTIC ACTIVITY</scope>
    <scope>SUBSTRATE SPECIFICITY</scope>
    <scope>BIOPHYSICOCHEMICAL PROPERTIES</scope>
    <scope>INDUCTION BY ELICITOR</scope>
</reference>
<reference key="2">
    <citation type="journal article" date="2012" name="Plant J.">
        <title>Systematic knockdown of morphine pathway enzymes in opium poppy using virus-induced gene silencing.</title>
        <authorList>
            <person name="Wijekoon C.P."/>
            <person name="Facchini P.J."/>
        </authorList>
    </citation>
    <scope>FUNCTION</scope>
    <scope>DISRUPTION PHENOTYPE</scope>
    <scope>CATALYTIC ACTIVITY</scope>
</reference>